<gene>
    <name type="primary">KRTAP5-5</name>
    <name type="synonym">KAP5-11</name>
    <name type="synonym">KAP5.5</name>
    <name type="synonym">KRTAP5-11</name>
    <name type="synonym">KRTAP5.11</name>
    <name type="synonym">KRTAP5.5</name>
</gene>
<feature type="chain" id="PRO_0000184103" description="Keratin-associated protein 5-5">
    <location>
        <begin position="1"/>
        <end position="237"/>
    </location>
</feature>
<feature type="repeat" description="1">
    <location>
        <begin position="62"/>
        <end position="65"/>
    </location>
</feature>
<feature type="repeat" description="2">
    <location>
        <begin position="68"/>
        <end position="71"/>
    </location>
</feature>
<feature type="repeat" description="3">
    <location>
        <begin position="74"/>
        <end position="77"/>
    </location>
</feature>
<feature type="repeat" description="4">
    <location>
        <begin position="159"/>
        <end position="162"/>
    </location>
</feature>
<feature type="repeat" description="5">
    <location>
        <begin position="178"/>
        <end position="181"/>
    </location>
</feature>
<feature type="repeat" description="6">
    <location>
        <begin position="188"/>
        <end position="191"/>
    </location>
</feature>
<feature type="repeat" description="7">
    <location>
        <begin position="198"/>
        <end position="201"/>
    </location>
</feature>
<feature type="repeat" description="8">
    <location>
        <begin position="227"/>
        <end position="230"/>
    </location>
</feature>
<feature type="region of interest" description="8 X 4 AA repeats of C-C-X-P">
    <location>
        <begin position="62"/>
        <end position="230"/>
    </location>
</feature>
<feature type="sequence conflict" description="In Ref. 1; BAD20201 and 2; CAF31639." evidence="2" ref="1 2">
    <original>R</original>
    <variation>L</variation>
    <location>
        <position position="17"/>
    </location>
</feature>
<feature type="sequence conflict" description="In Ref. 1; BAD20201 and 2; CAF31639." evidence="2" ref="1 2">
    <original>C</original>
    <variation>R</variation>
    <location>
        <position position="31"/>
    </location>
</feature>
<feature type="sequence conflict" description="In Ref. 1; BAD20201 and 2; CAF31639." evidence="2" ref="1 2">
    <original>G</original>
    <variation>GGCGS</variation>
    <location>
        <position position="43"/>
    </location>
</feature>
<feature type="sequence conflict" description="In Ref. 1; BAD20201 and 2; CAF31639." evidence="2" ref="1 2">
    <original>A</original>
    <variation>G</variation>
    <location>
        <position position="53"/>
    </location>
</feature>
<feature type="sequence conflict" description="In Ref. 1; BAD20201 and 2; CAF31639." evidence="2" ref="1 2">
    <location>
        <begin position="109"/>
        <end position="118"/>
    </location>
</feature>
<feature type="sequence conflict" description="In Ref. 1; BAD20201 and 2; CAF31639." evidence="2" ref="1 2">
    <original>S</original>
    <variation>C</variation>
    <location>
        <position position="157"/>
    </location>
</feature>
<feature type="sequence conflict" description="In Ref. 1; BAD20201 and 2; CAF31639." evidence="2" ref="1 2">
    <location>
        <begin position="173"/>
        <end position="182"/>
    </location>
</feature>
<organism>
    <name type="scientific">Homo sapiens</name>
    <name type="common">Human</name>
    <dbReference type="NCBI Taxonomy" id="9606"/>
    <lineage>
        <taxon>Eukaryota</taxon>
        <taxon>Metazoa</taxon>
        <taxon>Chordata</taxon>
        <taxon>Craniata</taxon>
        <taxon>Vertebrata</taxon>
        <taxon>Euteleostomi</taxon>
        <taxon>Mammalia</taxon>
        <taxon>Eutheria</taxon>
        <taxon>Euarchontoglires</taxon>
        <taxon>Primates</taxon>
        <taxon>Haplorrhini</taxon>
        <taxon>Catarrhini</taxon>
        <taxon>Hominidae</taxon>
        <taxon>Homo</taxon>
    </lineage>
</organism>
<proteinExistence type="evidence at protein level"/>
<evidence type="ECO:0000269" key="1">
    <source>
    </source>
</evidence>
<evidence type="ECO:0000305" key="2"/>
<reference key="1">
    <citation type="journal article" date="2004" name="Biochem. Biophys. Res. Commun.">
        <title>Identification of two novel clusters of ultrahigh-sulfur keratin-associated protein genes on human chromosome 11.</title>
        <authorList>
            <person name="Yahagi S."/>
            <person name="Shibuya K."/>
            <person name="Obayashi I."/>
            <person name="Masaki H."/>
            <person name="Kurata Y."/>
            <person name="Kudoh J."/>
            <person name="Shimizu N."/>
        </authorList>
    </citation>
    <scope>NUCLEOTIDE SEQUENCE [MRNA]</scope>
    <scope>TISSUE SPECIFICITY</scope>
    <source>
        <tissue>Hair root</tissue>
    </source>
</reference>
<reference key="2">
    <citation type="submission" date="2004-02" db="EMBL/GenBank/DDBJ databases">
        <title>Characterization of two domains of keratin associated protein (KAP) family members on human chromosome 11.</title>
        <authorList>
            <person name="Rogers M.A."/>
            <person name="Langbein L."/>
            <person name="Winter H."/>
            <person name="Praetzel S."/>
            <person name="Schweizer J."/>
        </authorList>
    </citation>
    <scope>NUCLEOTIDE SEQUENCE [MRNA]</scope>
    <source>
        <tissue>Scalp</tissue>
    </source>
</reference>
<reference key="3">
    <citation type="journal article" date="2006" name="Nature">
        <title>Human chromosome 11 DNA sequence and analysis including novel gene identification.</title>
        <authorList>
            <person name="Taylor T.D."/>
            <person name="Noguchi H."/>
            <person name="Totoki Y."/>
            <person name="Toyoda A."/>
            <person name="Kuroki Y."/>
            <person name="Dewar K."/>
            <person name="Lloyd C."/>
            <person name="Itoh T."/>
            <person name="Takeda T."/>
            <person name="Kim D.-W."/>
            <person name="She X."/>
            <person name="Barlow K.F."/>
            <person name="Bloom T."/>
            <person name="Bruford E."/>
            <person name="Chang J.L."/>
            <person name="Cuomo C.A."/>
            <person name="Eichler E."/>
            <person name="FitzGerald M.G."/>
            <person name="Jaffe D.B."/>
            <person name="LaButti K."/>
            <person name="Nicol R."/>
            <person name="Park H.-S."/>
            <person name="Seaman C."/>
            <person name="Sougnez C."/>
            <person name="Yang X."/>
            <person name="Zimmer A.R."/>
            <person name="Zody M.C."/>
            <person name="Birren B.W."/>
            <person name="Nusbaum C."/>
            <person name="Fujiyama A."/>
            <person name="Hattori M."/>
            <person name="Rogers J."/>
            <person name="Lander E.S."/>
            <person name="Sakaki Y."/>
        </authorList>
    </citation>
    <scope>NUCLEOTIDE SEQUENCE [LARGE SCALE GENOMIC DNA]</scope>
</reference>
<dbReference type="EMBL" id="AB126074">
    <property type="protein sequence ID" value="BAD20201.1"/>
    <property type="molecule type" value="mRNA"/>
</dbReference>
<dbReference type="EMBL" id="AJ628247">
    <property type="protein sequence ID" value="CAF31639.1"/>
    <property type="molecule type" value="mRNA"/>
</dbReference>
<dbReference type="EMBL" id="AP006285">
    <property type="status" value="NOT_ANNOTATED_CDS"/>
    <property type="molecule type" value="Genomic_DNA"/>
</dbReference>
<dbReference type="CCDS" id="CCDS41592.1"/>
<dbReference type="RefSeq" id="NP_001001480.2">
    <property type="nucleotide sequence ID" value="NM_001001480.3"/>
</dbReference>
<dbReference type="RefSeq" id="XP_006725597.1">
    <property type="nucleotide sequence ID" value="XM_006725534.2"/>
</dbReference>
<dbReference type="FunCoup" id="Q701N2">
    <property type="interactions" value="538"/>
</dbReference>
<dbReference type="STRING" id="9606.ENSP00000382584"/>
<dbReference type="GlyGen" id="Q701N2">
    <property type="glycosylation" value="1 site, 1 O-linked glycan (1 site)"/>
</dbReference>
<dbReference type="iPTMnet" id="Q701N2"/>
<dbReference type="PhosphoSitePlus" id="Q701N2"/>
<dbReference type="BioMuta" id="KRTAP5-5"/>
<dbReference type="DMDM" id="215274010"/>
<dbReference type="MassIVE" id="Q701N2"/>
<dbReference type="PaxDb" id="9606-ENSP00000382584"/>
<dbReference type="PeptideAtlas" id="Q701N2"/>
<dbReference type="Ensembl" id="ENST00000399676.4">
    <property type="protein sequence ID" value="ENSP00000382584.2"/>
    <property type="gene ID" value="ENSG00000185940.11"/>
</dbReference>
<dbReference type="Ensembl" id="ENST00000618541.2">
    <property type="protein sequence ID" value="ENSP00000481348.1"/>
    <property type="gene ID" value="ENSG00000277291.2"/>
</dbReference>
<dbReference type="Ensembl" id="ENST00000707575.1">
    <property type="protein sequence ID" value="ENSP00000516916.1"/>
    <property type="gene ID" value="ENSG00000291443.1"/>
</dbReference>
<dbReference type="GeneID" id="439915"/>
<dbReference type="KEGG" id="hsa:439915"/>
<dbReference type="MANE-Select" id="ENST00000399676.4">
    <property type="protein sequence ID" value="ENSP00000382584.2"/>
    <property type="RefSeq nucleotide sequence ID" value="NM_001001480.3"/>
    <property type="RefSeq protein sequence ID" value="NP_001001480.2"/>
</dbReference>
<dbReference type="UCSC" id="uc001lty.4">
    <property type="organism name" value="human"/>
</dbReference>
<dbReference type="AGR" id="HGNC:23601"/>
<dbReference type="CTD" id="439915"/>
<dbReference type="GeneCards" id="KRTAP5-5"/>
<dbReference type="HGNC" id="HGNC:23601">
    <property type="gene designation" value="KRTAP5-5"/>
</dbReference>
<dbReference type="HPA" id="ENSG00000185940">
    <property type="expression patterns" value="Tissue enriched (skin)"/>
</dbReference>
<dbReference type="neXtProt" id="NX_Q701N2"/>
<dbReference type="OpenTargets" id="ENSG00000185940"/>
<dbReference type="PharmGKB" id="PA134889326"/>
<dbReference type="VEuPathDB" id="HostDB:ENSG00000185940"/>
<dbReference type="eggNOG" id="KOG4726">
    <property type="taxonomic scope" value="Eukaryota"/>
</dbReference>
<dbReference type="GeneTree" id="ENSGT00940000164129"/>
<dbReference type="HOGENOM" id="CLU_097966_0_0_1"/>
<dbReference type="InParanoid" id="Q701N2"/>
<dbReference type="OMA" id="CGESVNW"/>
<dbReference type="PAN-GO" id="Q701N2">
    <property type="GO annotations" value="0 GO annotations based on evolutionary models"/>
</dbReference>
<dbReference type="PathwayCommons" id="Q701N2"/>
<dbReference type="Reactome" id="R-HSA-6805567">
    <property type="pathway name" value="Keratinization"/>
</dbReference>
<dbReference type="BioGRID-ORCS" id="439915">
    <property type="hits" value="62 hits in 1040 CRISPR screens"/>
</dbReference>
<dbReference type="GenomeRNAi" id="439915"/>
<dbReference type="Pharos" id="Q701N2">
    <property type="development level" value="Tdark"/>
</dbReference>
<dbReference type="PRO" id="PR:Q701N2"/>
<dbReference type="Proteomes" id="UP000005640">
    <property type="component" value="Chromosome 11"/>
</dbReference>
<dbReference type="RNAct" id="Q701N2">
    <property type="molecule type" value="protein"/>
</dbReference>
<dbReference type="Bgee" id="ENSG00000185940">
    <property type="expression patterns" value="Expressed in thymus and 21 other cell types or tissues"/>
</dbReference>
<dbReference type="GO" id="GO:0005829">
    <property type="term" value="C:cytosol"/>
    <property type="evidence" value="ECO:0000304"/>
    <property type="project" value="Reactome"/>
</dbReference>
<dbReference type="GO" id="GO:0005882">
    <property type="term" value="C:intermediate filament"/>
    <property type="evidence" value="ECO:0007669"/>
    <property type="project" value="UniProtKB-KW"/>
</dbReference>
<keyword id="KW-0416">Keratin</keyword>
<keyword id="KW-1267">Proteomics identification</keyword>
<keyword id="KW-1185">Reference proteome</keyword>
<keyword id="KW-0677">Repeat</keyword>
<protein>
    <recommendedName>
        <fullName>Keratin-associated protein 5-5</fullName>
    </recommendedName>
    <alternativeName>
        <fullName>Keratin-associated protein 5-11</fullName>
    </alternativeName>
    <alternativeName>
        <fullName>Keratin-associated protein 5.11</fullName>
    </alternativeName>
    <alternativeName>
        <fullName>Keratin-associated protein 5.5</fullName>
    </alternativeName>
    <alternativeName>
        <fullName>Ultrahigh sulfur keratin-associated protein 5.5</fullName>
    </alternativeName>
</protein>
<accession>Q701N2</accession>
<accession>A8MWN2</accession>
<comment type="function">
    <text>In the hair cortex, hair keratin intermediate filaments are embedded in an interfilamentous matrix, consisting of hair keratin-associated protein (KRTAP), which are essential for the formation of a rigid and resistant hair shaft through their extensive disulfide bond cross-linking with abundant cysteine residues of hair keratins. The matrix proteins include the high-sulfur and high-glycine-tyrosine keratins.</text>
</comment>
<comment type="subunit">
    <text>Interacts with hair keratins.</text>
</comment>
<comment type="tissue specificity">
    <text evidence="1">Restricted to hair root, not detected in any other tissues.</text>
</comment>
<comment type="similarity">
    <text evidence="2">Belongs to the KRTAP type 5 family.</text>
</comment>
<name>KRA55_HUMAN</name>
<sequence>MGCCGCSGGCGSGCGGRGSGCGGCGSGCGGCGSGCGGCGSGCGGCGGCGSGCAGCGGCGSGCCVPVCCCKPMCCCVPACSCSSCGKGGCGSCGGSKRGCVSCGVSKGACGSCGGSKGGCGSCGGSKGGCGSCGGSKGGCGSCGGSKGGCGSYGCSQSSCCKPCCCSSGCGSSCCQSSCCKPYCCQSSCCKPYCCQSSCCKPCSCFSGCGSSCCQSSCYKPCCCQSSCCVPVCCQCKI</sequence>